<organism>
    <name type="scientific">Thermoanaerobacter sp. (strain X514)</name>
    <dbReference type="NCBI Taxonomy" id="399726"/>
    <lineage>
        <taxon>Bacteria</taxon>
        <taxon>Bacillati</taxon>
        <taxon>Bacillota</taxon>
        <taxon>Clostridia</taxon>
        <taxon>Thermoanaerobacterales</taxon>
        <taxon>Thermoanaerobacteraceae</taxon>
        <taxon>Thermoanaerobacter</taxon>
    </lineage>
</organism>
<sequence>MARLFGTDGVRGIANYDLTPQLAFELGRAGAYVLTHGTHRPKVVVGKDSRISGDMLECALTAGLTSVGAEVISVGIIPTPAVAYLTRLYQADAGVMISASHNPVEYNGIKFFDKDGYKLPDEVEDRIENIIKEKIELPSPIGTGIGTRKEYTNSHRDYIEFLKSTIDGDLKGMKIVIDCAYGASSTIAPILFKELGAEVILHGAEPIGEKINVNCGSTHPEKLQQLVIENGADIGLAFDGDADRLIAVDEKGNVVDGDHIMAICAIDLKKKGRLKNNTVVATVMSNIGFEIALKEQGINLIRTKVGDRYVLEEMTKGGYSIGGEQSGHIIFLDDNTTGDGEITALKLCSISKESGKKLSELAACMITYPQVLINAKVKNELKNAYLEDEEIKREIENLEREMRGEGRVLIRPSGTEPLVRVMVEGKDYDKISQMAKELAELIERKLN</sequence>
<feature type="chain" id="PRO_1000201151" description="Phosphoglucosamine mutase">
    <location>
        <begin position="1"/>
        <end position="447"/>
    </location>
</feature>
<feature type="active site" description="Phosphoserine intermediate" evidence="1">
    <location>
        <position position="100"/>
    </location>
</feature>
<feature type="binding site" description="via phosphate group" evidence="1">
    <location>
        <position position="100"/>
    </location>
    <ligand>
        <name>Mg(2+)</name>
        <dbReference type="ChEBI" id="CHEBI:18420"/>
    </ligand>
</feature>
<feature type="binding site" evidence="1">
    <location>
        <position position="239"/>
    </location>
    <ligand>
        <name>Mg(2+)</name>
        <dbReference type="ChEBI" id="CHEBI:18420"/>
    </ligand>
</feature>
<feature type="binding site" evidence="1">
    <location>
        <position position="241"/>
    </location>
    <ligand>
        <name>Mg(2+)</name>
        <dbReference type="ChEBI" id="CHEBI:18420"/>
    </ligand>
</feature>
<feature type="binding site" evidence="1">
    <location>
        <position position="243"/>
    </location>
    <ligand>
        <name>Mg(2+)</name>
        <dbReference type="ChEBI" id="CHEBI:18420"/>
    </ligand>
</feature>
<feature type="modified residue" description="Phosphoserine" evidence="1">
    <location>
        <position position="100"/>
    </location>
</feature>
<evidence type="ECO:0000255" key="1">
    <source>
        <dbReference type="HAMAP-Rule" id="MF_01554"/>
    </source>
</evidence>
<dbReference type="EC" id="5.4.2.10" evidence="1"/>
<dbReference type="EMBL" id="CP000923">
    <property type="protein sequence ID" value="ABY92250.1"/>
    <property type="molecule type" value="Genomic_DNA"/>
</dbReference>
<dbReference type="RefSeq" id="WP_003867455.1">
    <property type="nucleotide sequence ID" value="NC_010320.1"/>
</dbReference>
<dbReference type="SMR" id="B0K5X4"/>
<dbReference type="KEGG" id="tex:Teth514_0949"/>
<dbReference type="HOGENOM" id="CLU_016950_7_0_9"/>
<dbReference type="Proteomes" id="UP000002155">
    <property type="component" value="Chromosome"/>
</dbReference>
<dbReference type="GO" id="GO:0005829">
    <property type="term" value="C:cytosol"/>
    <property type="evidence" value="ECO:0007669"/>
    <property type="project" value="TreeGrafter"/>
</dbReference>
<dbReference type="GO" id="GO:0000287">
    <property type="term" value="F:magnesium ion binding"/>
    <property type="evidence" value="ECO:0007669"/>
    <property type="project" value="UniProtKB-UniRule"/>
</dbReference>
<dbReference type="GO" id="GO:0008966">
    <property type="term" value="F:phosphoglucosamine mutase activity"/>
    <property type="evidence" value="ECO:0007669"/>
    <property type="project" value="UniProtKB-UniRule"/>
</dbReference>
<dbReference type="GO" id="GO:0004615">
    <property type="term" value="F:phosphomannomutase activity"/>
    <property type="evidence" value="ECO:0007669"/>
    <property type="project" value="TreeGrafter"/>
</dbReference>
<dbReference type="GO" id="GO:0005975">
    <property type="term" value="P:carbohydrate metabolic process"/>
    <property type="evidence" value="ECO:0007669"/>
    <property type="project" value="InterPro"/>
</dbReference>
<dbReference type="GO" id="GO:0009252">
    <property type="term" value="P:peptidoglycan biosynthetic process"/>
    <property type="evidence" value="ECO:0007669"/>
    <property type="project" value="TreeGrafter"/>
</dbReference>
<dbReference type="GO" id="GO:0006048">
    <property type="term" value="P:UDP-N-acetylglucosamine biosynthetic process"/>
    <property type="evidence" value="ECO:0007669"/>
    <property type="project" value="TreeGrafter"/>
</dbReference>
<dbReference type="CDD" id="cd05802">
    <property type="entry name" value="GlmM"/>
    <property type="match status" value="1"/>
</dbReference>
<dbReference type="FunFam" id="3.30.310.50:FF:000001">
    <property type="entry name" value="Phosphoglucosamine mutase"/>
    <property type="match status" value="1"/>
</dbReference>
<dbReference type="FunFam" id="3.40.120.10:FF:000001">
    <property type="entry name" value="Phosphoglucosamine mutase"/>
    <property type="match status" value="1"/>
</dbReference>
<dbReference type="FunFam" id="3.40.120.10:FF:000002">
    <property type="entry name" value="Phosphoglucosamine mutase"/>
    <property type="match status" value="1"/>
</dbReference>
<dbReference type="Gene3D" id="3.40.120.10">
    <property type="entry name" value="Alpha-D-Glucose-1,6-Bisphosphate, subunit A, domain 3"/>
    <property type="match status" value="3"/>
</dbReference>
<dbReference type="Gene3D" id="3.30.310.50">
    <property type="entry name" value="Alpha-D-phosphohexomutase, C-terminal domain"/>
    <property type="match status" value="1"/>
</dbReference>
<dbReference type="HAMAP" id="MF_01554_B">
    <property type="entry name" value="GlmM_B"/>
    <property type="match status" value="1"/>
</dbReference>
<dbReference type="InterPro" id="IPR005844">
    <property type="entry name" value="A-D-PHexomutase_a/b/a-I"/>
</dbReference>
<dbReference type="InterPro" id="IPR016055">
    <property type="entry name" value="A-D-PHexomutase_a/b/a-I/II/III"/>
</dbReference>
<dbReference type="InterPro" id="IPR005845">
    <property type="entry name" value="A-D-PHexomutase_a/b/a-II"/>
</dbReference>
<dbReference type="InterPro" id="IPR005846">
    <property type="entry name" value="A-D-PHexomutase_a/b/a-III"/>
</dbReference>
<dbReference type="InterPro" id="IPR005843">
    <property type="entry name" value="A-D-PHexomutase_C"/>
</dbReference>
<dbReference type="InterPro" id="IPR036900">
    <property type="entry name" value="A-D-PHexomutase_C_sf"/>
</dbReference>
<dbReference type="InterPro" id="IPR016066">
    <property type="entry name" value="A-D-PHexomutase_CS"/>
</dbReference>
<dbReference type="InterPro" id="IPR005841">
    <property type="entry name" value="Alpha-D-phosphohexomutase_SF"/>
</dbReference>
<dbReference type="InterPro" id="IPR006352">
    <property type="entry name" value="GlmM_bact"/>
</dbReference>
<dbReference type="InterPro" id="IPR050060">
    <property type="entry name" value="Phosphoglucosamine_mutase"/>
</dbReference>
<dbReference type="NCBIfam" id="TIGR01455">
    <property type="entry name" value="glmM"/>
    <property type="match status" value="1"/>
</dbReference>
<dbReference type="NCBIfam" id="NF008139">
    <property type="entry name" value="PRK10887.1"/>
    <property type="match status" value="1"/>
</dbReference>
<dbReference type="PANTHER" id="PTHR42946:SF1">
    <property type="entry name" value="PHOSPHOGLUCOMUTASE (ALPHA-D-GLUCOSE-1,6-BISPHOSPHATE-DEPENDENT)"/>
    <property type="match status" value="1"/>
</dbReference>
<dbReference type="PANTHER" id="PTHR42946">
    <property type="entry name" value="PHOSPHOHEXOSE MUTASE"/>
    <property type="match status" value="1"/>
</dbReference>
<dbReference type="Pfam" id="PF02878">
    <property type="entry name" value="PGM_PMM_I"/>
    <property type="match status" value="1"/>
</dbReference>
<dbReference type="Pfam" id="PF02879">
    <property type="entry name" value="PGM_PMM_II"/>
    <property type="match status" value="1"/>
</dbReference>
<dbReference type="Pfam" id="PF02880">
    <property type="entry name" value="PGM_PMM_III"/>
    <property type="match status" value="1"/>
</dbReference>
<dbReference type="Pfam" id="PF00408">
    <property type="entry name" value="PGM_PMM_IV"/>
    <property type="match status" value="1"/>
</dbReference>
<dbReference type="PRINTS" id="PR00509">
    <property type="entry name" value="PGMPMM"/>
</dbReference>
<dbReference type="SUPFAM" id="SSF55957">
    <property type="entry name" value="Phosphoglucomutase, C-terminal domain"/>
    <property type="match status" value="1"/>
</dbReference>
<dbReference type="SUPFAM" id="SSF53738">
    <property type="entry name" value="Phosphoglucomutase, first 3 domains"/>
    <property type="match status" value="3"/>
</dbReference>
<dbReference type="PROSITE" id="PS00710">
    <property type="entry name" value="PGM_PMM"/>
    <property type="match status" value="1"/>
</dbReference>
<protein>
    <recommendedName>
        <fullName evidence="1">Phosphoglucosamine mutase</fullName>
        <ecNumber evidence="1">5.4.2.10</ecNumber>
    </recommendedName>
</protein>
<gene>
    <name evidence="1" type="primary">glmM</name>
    <name type="ordered locus">Teth514_0949</name>
</gene>
<comment type="function">
    <text evidence="1">Catalyzes the conversion of glucosamine-6-phosphate to glucosamine-1-phosphate.</text>
</comment>
<comment type="catalytic activity">
    <reaction evidence="1">
        <text>alpha-D-glucosamine 1-phosphate = D-glucosamine 6-phosphate</text>
        <dbReference type="Rhea" id="RHEA:23424"/>
        <dbReference type="ChEBI" id="CHEBI:58516"/>
        <dbReference type="ChEBI" id="CHEBI:58725"/>
        <dbReference type="EC" id="5.4.2.10"/>
    </reaction>
</comment>
<comment type="cofactor">
    <cofactor evidence="1">
        <name>Mg(2+)</name>
        <dbReference type="ChEBI" id="CHEBI:18420"/>
    </cofactor>
    <text evidence="1">Binds 1 Mg(2+) ion per subunit.</text>
</comment>
<comment type="PTM">
    <text evidence="1">Activated by phosphorylation.</text>
</comment>
<comment type="similarity">
    <text evidence="1">Belongs to the phosphohexose mutase family.</text>
</comment>
<accession>B0K5X4</accession>
<proteinExistence type="inferred from homology"/>
<reference key="1">
    <citation type="submission" date="2008-01" db="EMBL/GenBank/DDBJ databases">
        <title>Complete sequence of Thermoanaerobacter sp. X514.</title>
        <authorList>
            <consortium name="US DOE Joint Genome Institute"/>
            <person name="Copeland A."/>
            <person name="Lucas S."/>
            <person name="Lapidus A."/>
            <person name="Barry K."/>
            <person name="Glavina del Rio T."/>
            <person name="Dalin E."/>
            <person name="Tice H."/>
            <person name="Pitluck S."/>
            <person name="Bruce D."/>
            <person name="Goodwin L."/>
            <person name="Saunders E."/>
            <person name="Brettin T."/>
            <person name="Detter J.C."/>
            <person name="Han C."/>
            <person name="Schmutz J."/>
            <person name="Larimer F."/>
            <person name="Land M."/>
            <person name="Hauser L."/>
            <person name="Kyrpides N."/>
            <person name="Kim E."/>
            <person name="Hemme C."/>
            <person name="Fields M.W."/>
            <person name="He Z."/>
            <person name="Zhou J."/>
            <person name="Richardson P."/>
        </authorList>
    </citation>
    <scope>NUCLEOTIDE SEQUENCE [LARGE SCALE GENOMIC DNA]</scope>
    <source>
        <strain>X514</strain>
    </source>
</reference>
<keyword id="KW-0413">Isomerase</keyword>
<keyword id="KW-0460">Magnesium</keyword>
<keyword id="KW-0479">Metal-binding</keyword>
<keyword id="KW-0597">Phosphoprotein</keyword>
<name>GLMM_THEPX</name>